<organism>
    <name type="scientific">Triticum aestivum</name>
    <name type="common">Wheat</name>
    <dbReference type="NCBI Taxonomy" id="4565"/>
    <lineage>
        <taxon>Eukaryota</taxon>
        <taxon>Viridiplantae</taxon>
        <taxon>Streptophyta</taxon>
        <taxon>Embryophyta</taxon>
        <taxon>Tracheophyta</taxon>
        <taxon>Spermatophyta</taxon>
        <taxon>Magnoliopsida</taxon>
        <taxon>Liliopsida</taxon>
        <taxon>Poales</taxon>
        <taxon>Poaceae</taxon>
        <taxon>BOP clade</taxon>
        <taxon>Pooideae</taxon>
        <taxon>Triticodae</taxon>
        <taxon>Triticeae</taxon>
        <taxon>Triticinae</taxon>
        <taxon>Triticum</taxon>
    </lineage>
</organism>
<name>CCSA_WHEAT</name>
<reference key="1">
    <citation type="journal article" date="2000" name="Plant Mol. Biol. Rep.">
        <title>Chinese spring wheat (Triticum aestivum L.) chloroplast genome: complete sequence and contig clones.</title>
        <authorList>
            <person name="Ogihara Y."/>
            <person name="Isono K."/>
            <person name="Kojima T."/>
            <person name="Endo A."/>
            <person name="Hanaoka M."/>
            <person name="Shiina T."/>
            <person name="Terachi T."/>
            <person name="Utsugi S."/>
            <person name="Murata M."/>
            <person name="Mori N."/>
            <person name="Takumi S."/>
            <person name="Ikeo K."/>
            <person name="Gojobori T."/>
            <person name="Murai R."/>
            <person name="Murai K."/>
            <person name="Matsuoka Y."/>
            <person name="Ohnishi Y."/>
            <person name="Tajiri H."/>
            <person name="Tsunewaki K."/>
        </authorList>
    </citation>
    <scope>NUCLEOTIDE SEQUENCE [LARGE SCALE GENOMIC DNA]</scope>
    <source>
        <strain>cv. Chinese Spring</strain>
    </source>
</reference>
<feature type="chain" id="PRO_0000201619" description="Cytochrome c biogenesis protein CcsA">
    <location>
        <begin position="1"/>
        <end position="322"/>
    </location>
</feature>
<feature type="transmembrane region" description="Helical" evidence="1">
    <location>
        <begin position="9"/>
        <end position="29"/>
    </location>
</feature>
<feature type="transmembrane region" description="Helical" evidence="1">
    <location>
        <begin position="44"/>
        <end position="64"/>
    </location>
</feature>
<feature type="transmembrane region" description="Helical" evidence="1">
    <location>
        <begin position="143"/>
        <end position="163"/>
    </location>
</feature>
<feature type="transmembrane region" description="Helical" evidence="1">
    <location>
        <begin position="226"/>
        <end position="246"/>
    </location>
</feature>
<feature type="transmembrane region" description="Helical" evidence="1">
    <location>
        <begin position="259"/>
        <end position="276"/>
    </location>
</feature>
<feature type="transmembrane region" description="Helical" evidence="1">
    <location>
        <begin position="289"/>
        <end position="309"/>
    </location>
</feature>
<comment type="function">
    <text evidence="1">Required during biogenesis of c-type cytochromes (cytochrome c6 and cytochrome f) at the step of heme attachment.</text>
</comment>
<comment type="subunit">
    <text evidence="1">May interact with Ccs1.</text>
</comment>
<comment type="subcellular location">
    <subcellularLocation>
        <location evidence="1">Plastid</location>
        <location evidence="1">Chloroplast thylakoid membrane</location>
        <topology evidence="1">Multi-pass membrane protein</topology>
    </subcellularLocation>
</comment>
<comment type="similarity">
    <text evidence="1">Belongs to the CcmF/CycK/Ccl1/NrfE/CcsA family.</text>
</comment>
<dbReference type="EMBL" id="AB042240">
    <property type="protein sequence ID" value="BAB47084.1"/>
    <property type="molecule type" value="Genomic_DNA"/>
</dbReference>
<dbReference type="RefSeq" id="NP_114307.1">
    <property type="nucleotide sequence ID" value="NC_002762.1"/>
</dbReference>
<dbReference type="SMR" id="P58266"/>
<dbReference type="STRING" id="4565.P58266"/>
<dbReference type="PaxDb" id="4565-EPlTAEP00000010045"/>
<dbReference type="GeneID" id="803212"/>
<dbReference type="KEGG" id="taes:803212"/>
<dbReference type="eggNOG" id="ENOG502QU0T">
    <property type="taxonomic scope" value="Eukaryota"/>
</dbReference>
<dbReference type="Proteomes" id="UP000019116">
    <property type="component" value="Chloroplast"/>
</dbReference>
<dbReference type="GO" id="GO:0009535">
    <property type="term" value="C:chloroplast thylakoid membrane"/>
    <property type="evidence" value="ECO:0007669"/>
    <property type="project" value="UniProtKB-SubCell"/>
</dbReference>
<dbReference type="GO" id="GO:0020037">
    <property type="term" value="F:heme binding"/>
    <property type="evidence" value="ECO:0007669"/>
    <property type="project" value="InterPro"/>
</dbReference>
<dbReference type="GO" id="GO:0017004">
    <property type="term" value="P:cytochrome complex assembly"/>
    <property type="evidence" value="ECO:0007669"/>
    <property type="project" value="UniProtKB-UniRule"/>
</dbReference>
<dbReference type="HAMAP" id="MF_01391">
    <property type="entry name" value="CytC_CcsA"/>
    <property type="match status" value="1"/>
</dbReference>
<dbReference type="InterPro" id="IPR002541">
    <property type="entry name" value="Cyt_c_assembly"/>
</dbReference>
<dbReference type="InterPro" id="IPR017562">
    <property type="entry name" value="Cyt_c_biogenesis_CcsA"/>
</dbReference>
<dbReference type="InterPro" id="IPR045062">
    <property type="entry name" value="Cyt_c_biogenesis_CcsA/CcmC"/>
</dbReference>
<dbReference type="NCBIfam" id="TIGR03144">
    <property type="entry name" value="cytochr_II_ccsB"/>
    <property type="match status" value="1"/>
</dbReference>
<dbReference type="PANTHER" id="PTHR30071:SF1">
    <property type="entry name" value="CYTOCHROME B_B6 PROTEIN-RELATED"/>
    <property type="match status" value="1"/>
</dbReference>
<dbReference type="PANTHER" id="PTHR30071">
    <property type="entry name" value="HEME EXPORTER PROTEIN C"/>
    <property type="match status" value="1"/>
</dbReference>
<dbReference type="Pfam" id="PF01578">
    <property type="entry name" value="Cytochrom_C_asm"/>
    <property type="match status" value="1"/>
</dbReference>
<keyword id="KW-0150">Chloroplast</keyword>
<keyword id="KW-0201">Cytochrome c-type biogenesis</keyword>
<keyword id="KW-0472">Membrane</keyword>
<keyword id="KW-0934">Plastid</keyword>
<keyword id="KW-1185">Reference proteome</keyword>
<keyword id="KW-0793">Thylakoid</keyword>
<keyword id="KW-0812">Transmembrane</keyword>
<keyword id="KW-1133">Transmembrane helix</keyword>
<gene>
    <name evidence="1" type="primary">ccsA</name>
</gene>
<sequence length="322" mass="36457">MLFATLEHILTHISFSTISIVITIHLITLLVRELGGLRDSSEKGMIVTFFSITGFLVSRWASSGHFPLSNLYESLISLSWALYILHTIPKIQNSKNDLSTITTPSTILTQGFATSGLLTEMHQSTILVPALQSQWLMMHVSMMLLSYATLLGGPPLSAAILIIRFRNNFHFFSKKKKNVLNKTFLFSDIKYFYAKRSALKRTSVPSFPNYYKYQLTERLDSWSYRVISLGFTLLTGGILGGAVWANEAWGAYWNWDPKETWAFITWTIFAIYLHSRTHPNWKGTNSALIASIGFLIIWICYFGINLLGIGLHSYGSFTLTPK</sequence>
<geneLocation type="chloroplast"/>
<accession>P58266</accession>
<evidence type="ECO:0000255" key="1">
    <source>
        <dbReference type="HAMAP-Rule" id="MF_01391"/>
    </source>
</evidence>
<proteinExistence type="inferred from homology"/>
<protein>
    <recommendedName>
        <fullName evidence="1">Cytochrome c biogenesis protein CcsA</fullName>
    </recommendedName>
</protein>